<sequence>MRMSTTTEIIAHHWAFAVFLIGAVGLCGLMLLGAYFLGGRAQARAKNVPYESGIDSVGSARMRLSAKFYLVAMFFVIFDVEALYLYAWSISIRESGWIGFIEAAIFILVLLAGLFYLVRIGALDWTPTRSNRRVSKPSTVRYASSHPQDISQELSVAGSQQANESR</sequence>
<reference key="1">
    <citation type="journal article" date="2006" name="J. Bacteriol.">
        <title>Complete genome sequence of Yersinia pestis strains Antiqua and Nepal516: evidence of gene reduction in an emerging pathogen.</title>
        <authorList>
            <person name="Chain P.S.G."/>
            <person name="Hu P."/>
            <person name="Malfatti S.A."/>
            <person name="Radnedge L."/>
            <person name="Larimer F."/>
            <person name="Vergez L.M."/>
            <person name="Worsham P."/>
            <person name="Chu M.C."/>
            <person name="Andersen G.L."/>
        </authorList>
    </citation>
    <scope>NUCLEOTIDE SEQUENCE [LARGE SCALE GENOMIC DNA]</scope>
    <source>
        <strain>Nepal516</strain>
    </source>
</reference>
<reference key="2">
    <citation type="submission" date="2009-04" db="EMBL/GenBank/DDBJ databases">
        <title>Yersinia pestis Nepal516A whole genome shotgun sequencing project.</title>
        <authorList>
            <person name="Plunkett G. III"/>
            <person name="Anderson B.D."/>
            <person name="Baumler D.J."/>
            <person name="Burland V."/>
            <person name="Cabot E.L."/>
            <person name="Glasner J.D."/>
            <person name="Mau B."/>
            <person name="Neeno-Eckwall E."/>
            <person name="Perna N.T."/>
            <person name="Munk A.C."/>
            <person name="Tapia R."/>
            <person name="Green L.D."/>
            <person name="Rogers Y.C."/>
            <person name="Detter J.C."/>
            <person name="Bruce D.C."/>
            <person name="Brettin T.S."/>
        </authorList>
    </citation>
    <scope>NUCLEOTIDE SEQUENCE [LARGE SCALE GENOMIC DNA]</scope>
    <source>
        <strain>Nepal516</strain>
    </source>
</reference>
<protein>
    <recommendedName>
        <fullName evidence="1">NADH-quinone oxidoreductase subunit A</fullName>
        <ecNumber evidence="1">7.1.1.-</ecNumber>
    </recommendedName>
    <alternativeName>
        <fullName evidence="1">NADH dehydrogenase I subunit A</fullName>
    </alternativeName>
    <alternativeName>
        <fullName evidence="1">NDH-1 subunit A</fullName>
    </alternativeName>
    <alternativeName>
        <fullName evidence="1">NUO1</fullName>
    </alternativeName>
</protein>
<dbReference type="EC" id="7.1.1.-" evidence="1"/>
<dbReference type="EMBL" id="CP000305">
    <property type="protein sequence ID" value="ABG18479.1"/>
    <property type="molecule type" value="Genomic_DNA"/>
</dbReference>
<dbReference type="EMBL" id="ACNQ01000013">
    <property type="protein sequence ID" value="EEO76202.1"/>
    <property type="molecule type" value="Genomic_DNA"/>
</dbReference>
<dbReference type="RefSeq" id="WP_002210279.1">
    <property type="nucleotide sequence ID" value="NZ_ACNQ01000013.1"/>
</dbReference>
<dbReference type="SMR" id="Q1CHQ1"/>
<dbReference type="KEGG" id="ypn:YPN_2150"/>
<dbReference type="HOGENOM" id="CLU_119549_2_1_6"/>
<dbReference type="Proteomes" id="UP000008936">
    <property type="component" value="Chromosome"/>
</dbReference>
<dbReference type="GO" id="GO:0030964">
    <property type="term" value="C:NADH dehydrogenase complex"/>
    <property type="evidence" value="ECO:0007669"/>
    <property type="project" value="TreeGrafter"/>
</dbReference>
<dbReference type="GO" id="GO:0005886">
    <property type="term" value="C:plasma membrane"/>
    <property type="evidence" value="ECO:0007669"/>
    <property type="project" value="UniProtKB-SubCell"/>
</dbReference>
<dbReference type="GO" id="GO:0008137">
    <property type="term" value="F:NADH dehydrogenase (ubiquinone) activity"/>
    <property type="evidence" value="ECO:0007669"/>
    <property type="project" value="InterPro"/>
</dbReference>
<dbReference type="GO" id="GO:0050136">
    <property type="term" value="F:NADH:ubiquinone reductase (non-electrogenic) activity"/>
    <property type="evidence" value="ECO:0007669"/>
    <property type="project" value="UniProtKB-UniRule"/>
</dbReference>
<dbReference type="GO" id="GO:0048038">
    <property type="term" value="F:quinone binding"/>
    <property type="evidence" value="ECO:0007669"/>
    <property type="project" value="UniProtKB-KW"/>
</dbReference>
<dbReference type="FunFam" id="1.20.58.1610:FF:000003">
    <property type="entry name" value="NADH-quinone oxidoreductase subunit A"/>
    <property type="match status" value="1"/>
</dbReference>
<dbReference type="Gene3D" id="1.20.58.1610">
    <property type="entry name" value="NADH:ubiquinone/plastoquinone oxidoreductase, chain 3"/>
    <property type="match status" value="1"/>
</dbReference>
<dbReference type="HAMAP" id="MF_01394">
    <property type="entry name" value="NDH1_NuoA"/>
    <property type="match status" value="1"/>
</dbReference>
<dbReference type="InterPro" id="IPR023043">
    <property type="entry name" value="NAD(P)H_OxRDtase_bac/plastid"/>
</dbReference>
<dbReference type="InterPro" id="IPR000440">
    <property type="entry name" value="NADH_UbQ/plastoQ_OxRdtase_su3"/>
</dbReference>
<dbReference type="InterPro" id="IPR038430">
    <property type="entry name" value="NDAH_ubi_oxred_su3_sf"/>
</dbReference>
<dbReference type="PANTHER" id="PTHR11058:SF21">
    <property type="entry name" value="NADH-QUINONE OXIDOREDUCTASE SUBUNIT A"/>
    <property type="match status" value="1"/>
</dbReference>
<dbReference type="PANTHER" id="PTHR11058">
    <property type="entry name" value="NADH-UBIQUINONE OXIDOREDUCTASE CHAIN 3"/>
    <property type="match status" value="1"/>
</dbReference>
<dbReference type="Pfam" id="PF00507">
    <property type="entry name" value="Oxidored_q4"/>
    <property type="match status" value="1"/>
</dbReference>
<evidence type="ECO:0000255" key="1">
    <source>
        <dbReference type="HAMAP-Rule" id="MF_01394"/>
    </source>
</evidence>
<evidence type="ECO:0000256" key="2">
    <source>
        <dbReference type="SAM" id="MobiDB-lite"/>
    </source>
</evidence>
<accession>Q1CHQ1</accession>
<accession>C4GV74</accession>
<feature type="chain" id="PRO_5000115394" description="NADH-quinone oxidoreductase subunit A">
    <location>
        <begin position="1"/>
        <end position="166"/>
    </location>
</feature>
<feature type="transmembrane region" description="Helical" evidence="1">
    <location>
        <begin position="16"/>
        <end position="36"/>
    </location>
</feature>
<feature type="transmembrane region" description="Helical" evidence="1">
    <location>
        <begin position="68"/>
        <end position="88"/>
    </location>
</feature>
<feature type="transmembrane region" description="Helical" evidence="1">
    <location>
        <begin position="98"/>
        <end position="118"/>
    </location>
</feature>
<feature type="region of interest" description="Disordered" evidence="2">
    <location>
        <begin position="141"/>
        <end position="166"/>
    </location>
</feature>
<organism>
    <name type="scientific">Yersinia pestis bv. Antiqua (strain Nepal516)</name>
    <dbReference type="NCBI Taxonomy" id="377628"/>
    <lineage>
        <taxon>Bacteria</taxon>
        <taxon>Pseudomonadati</taxon>
        <taxon>Pseudomonadota</taxon>
        <taxon>Gammaproteobacteria</taxon>
        <taxon>Enterobacterales</taxon>
        <taxon>Yersiniaceae</taxon>
        <taxon>Yersinia</taxon>
    </lineage>
</organism>
<keyword id="KW-0997">Cell inner membrane</keyword>
<keyword id="KW-1003">Cell membrane</keyword>
<keyword id="KW-0472">Membrane</keyword>
<keyword id="KW-0520">NAD</keyword>
<keyword id="KW-0874">Quinone</keyword>
<keyword id="KW-1278">Translocase</keyword>
<keyword id="KW-0812">Transmembrane</keyword>
<keyword id="KW-1133">Transmembrane helix</keyword>
<keyword id="KW-0813">Transport</keyword>
<keyword id="KW-0830">Ubiquinone</keyword>
<name>NUOA_YERPN</name>
<comment type="function">
    <text evidence="1">NDH-1 shuttles electrons from NADH, via FMN and iron-sulfur (Fe-S) centers, to quinones in the respiratory chain. The immediate electron acceptor for the enzyme in this species is believed to be ubiquinone. Couples the redox reaction to proton translocation (for every two electrons transferred, four hydrogen ions are translocated across the cytoplasmic membrane), and thus conserves the redox energy in a proton gradient.</text>
</comment>
<comment type="catalytic activity">
    <reaction evidence="1">
        <text>a quinone + NADH + 5 H(+)(in) = a quinol + NAD(+) + 4 H(+)(out)</text>
        <dbReference type="Rhea" id="RHEA:57888"/>
        <dbReference type="ChEBI" id="CHEBI:15378"/>
        <dbReference type="ChEBI" id="CHEBI:24646"/>
        <dbReference type="ChEBI" id="CHEBI:57540"/>
        <dbReference type="ChEBI" id="CHEBI:57945"/>
        <dbReference type="ChEBI" id="CHEBI:132124"/>
    </reaction>
</comment>
<comment type="subunit">
    <text evidence="1">NDH-1 is composed of 13 different subunits. Subunits NuoA, H, J, K, L, M, N constitute the membrane sector of the complex.</text>
</comment>
<comment type="subcellular location">
    <subcellularLocation>
        <location evidence="1">Cell inner membrane</location>
        <topology evidence="1">Multi-pass membrane protein</topology>
    </subcellularLocation>
</comment>
<comment type="similarity">
    <text evidence="1">Belongs to the complex I subunit 3 family.</text>
</comment>
<gene>
    <name evidence="1" type="primary">nuoA</name>
    <name type="ordered locus">YPN_2150</name>
    <name type="ORF">YP516_2399</name>
</gene>
<proteinExistence type="inferred from homology"/>